<gene>
    <name evidence="1" type="primary">ruvB</name>
    <name type="ordered locus">FN1217</name>
</gene>
<feature type="chain" id="PRO_0000165533" description="Holliday junction branch migration complex subunit RuvB">
    <location>
        <begin position="1"/>
        <end position="332"/>
    </location>
</feature>
<feature type="region of interest" description="Large ATPase domain (RuvB-L)" evidence="1">
    <location>
        <begin position="1"/>
        <end position="181"/>
    </location>
</feature>
<feature type="region of interest" description="Small ATPAse domain (RuvB-S)" evidence="1">
    <location>
        <begin position="182"/>
        <end position="252"/>
    </location>
</feature>
<feature type="region of interest" description="Head domain (RuvB-H)" evidence="1">
    <location>
        <begin position="255"/>
        <end position="332"/>
    </location>
</feature>
<feature type="binding site" evidence="1">
    <location>
        <position position="20"/>
    </location>
    <ligand>
        <name>ATP</name>
        <dbReference type="ChEBI" id="CHEBI:30616"/>
    </ligand>
</feature>
<feature type="binding site" evidence="1">
    <location>
        <position position="21"/>
    </location>
    <ligand>
        <name>ATP</name>
        <dbReference type="ChEBI" id="CHEBI:30616"/>
    </ligand>
</feature>
<feature type="binding site" evidence="1">
    <location>
        <position position="62"/>
    </location>
    <ligand>
        <name>ATP</name>
        <dbReference type="ChEBI" id="CHEBI:30616"/>
    </ligand>
</feature>
<feature type="binding site" evidence="1">
    <location>
        <position position="65"/>
    </location>
    <ligand>
        <name>ATP</name>
        <dbReference type="ChEBI" id="CHEBI:30616"/>
    </ligand>
</feature>
<feature type="binding site" evidence="1">
    <location>
        <position position="66"/>
    </location>
    <ligand>
        <name>ATP</name>
        <dbReference type="ChEBI" id="CHEBI:30616"/>
    </ligand>
</feature>
<feature type="binding site" evidence="1">
    <location>
        <position position="66"/>
    </location>
    <ligand>
        <name>Mg(2+)</name>
        <dbReference type="ChEBI" id="CHEBI:18420"/>
    </ligand>
</feature>
<feature type="binding site" evidence="1">
    <location>
        <position position="67"/>
    </location>
    <ligand>
        <name>ATP</name>
        <dbReference type="ChEBI" id="CHEBI:30616"/>
    </ligand>
</feature>
<feature type="binding site" evidence="1">
    <location>
        <position position="171"/>
    </location>
    <ligand>
        <name>ATP</name>
        <dbReference type="ChEBI" id="CHEBI:30616"/>
    </ligand>
</feature>
<feature type="binding site" evidence="1">
    <location>
        <position position="181"/>
    </location>
    <ligand>
        <name>ATP</name>
        <dbReference type="ChEBI" id="CHEBI:30616"/>
    </ligand>
</feature>
<feature type="binding site" evidence="1">
    <location>
        <position position="218"/>
    </location>
    <ligand>
        <name>ATP</name>
        <dbReference type="ChEBI" id="CHEBI:30616"/>
    </ligand>
</feature>
<feature type="binding site" evidence="1">
    <location>
        <position position="291"/>
    </location>
    <ligand>
        <name>DNA</name>
        <dbReference type="ChEBI" id="CHEBI:16991"/>
    </ligand>
</feature>
<feature type="binding site" evidence="1">
    <location>
        <position position="310"/>
    </location>
    <ligand>
        <name>DNA</name>
        <dbReference type="ChEBI" id="CHEBI:16991"/>
    </ligand>
</feature>
<feature type="binding site" evidence="1">
    <location>
        <position position="315"/>
    </location>
    <ligand>
        <name>DNA</name>
        <dbReference type="ChEBI" id="CHEBI:16991"/>
    </ligand>
</feature>
<sequence>MERIISELEMPNEIEIQKSLRPKSFDEYIGQENLKEKMSISIKAAQKRNMVVDHILLYGPPGLGKTTLAGVIANEMKANLKITSGPILEKAGDLAAILTSLEENDILFIDEIHRLNSTVEEILYPAMEDGELDIIIGKGPSAKSIRIELPPFTLIGATTRAGLLSAPLRDRFGVSHKMEYYNENEIKSIIIRGAKILGVKINEDGAIEISKRSRGTPRIANRLLKRVRDYCEIKGNGTIDKLSAKNALDMLGVDSNGLDDLDRNIINSIIENYDGGPVGIETLSLLLGEDRRTLEEVYEPYLVKIGFLKRTNRGRVVTSKAYQHFKKVEVKI</sequence>
<proteinExistence type="inferred from homology"/>
<dbReference type="EC" id="3.6.4.-" evidence="1"/>
<dbReference type="EMBL" id="AE009951">
    <property type="protein sequence ID" value="AAL95413.1"/>
    <property type="molecule type" value="Genomic_DNA"/>
</dbReference>
<dbReference type="RefSeq" id="NP_604114.1">
    <property type="nucleotide sequence ID" value="NC_003454.1"/>
</dbReference>
<dbReference type="RefSeq" id="WP_005903189.1">
    <property type="nucleotide sequence ID" value="NZ_OZ209243.1"/>
</dbReference>
<dbReference type="SMR" id="Q8RE97"/>
<dbReference type="FunCoup" id="Q8RE97">
    <property type="interactions" value="302"/>
</dbReference>
<dbReference type="STRING" id="190304.FN1217"/>
<dbReference type="PaxDb" id="190304-FN1217"/>
<dbReference type="EnsemblBacteria" id="AAL95413">
    <property type="protein sequence ID" value="AAL95413"/>
    <property type="gene ID" value="FN1217"/>
</dbReference>
<dbReference type="GeneID" id="79784194"/>
<dbReference type="KEGG" id="fnu:FN1217"/>
<dbReference type="PATRIC" id="fig|190304.8.peg.1780"/>
<dbReference type="eggNOG" id="COG2255">
    <property type="taxonomic scope" value="Bacteria"/>
</dbReference>
<dbReference type="HOGENOM" id="CLU_055599_1_0_0"/>
<dbReference type="InParanoid" id="Q8RE97"/>
<dbReference type="BioCyc" id="FNUC190304:G1FZS-1794-MONOMER"/>
<dbReference type="Proteomes" id="UP000002521">
    <property type="component" value="Chromosome"/>
</dbReference>
<dbReference type="GO" id="GO:0005737">
    <property type="term" value="C:cytoplasm"/>
    <property type="evidence" value="ECO:0007669"/>
    <property type="project" value="UniProtKB-SubCell"/>
</dbReference>
<dbReference type="GO" id="GO:0048476">
    <property type="term" value="C:Holliday junction resolvase complex"/>
    <property type="evidence" value="ECO:0007669"/>
    <property type="project" value="UniProtKB-UniRule"/>
</dbReference>
<dbReference type="GO" id="GO:0005524">
    <property type="term" value="F:ATP binding"/>
    <property type="evidence" value="ECO:0007669"/>
    <property type="project" value="UniProtKB-UniRule"/>
</dbReference>
<dbReference type="GO" id="GO:0016887">
    <property type="term" value="F:ATP hydrolysis activity"/>
    <property type="evidence" value="ECO:0007669"/>
    <property type="project" value="InterPro"/>
</dbReference>
<dbReference type="GO" id="GO:0000400">
    <property type="term" value="F:four-way junction DNA binding"/>
    <property type="evidence" value="ECO:0007669"/>
    <property type="project" value="UniProtKB-UniRule"/>
</dbReference>
<dbReference type="GO" id="GO:0009378">
    <property type="term" value="F:four-way junction helicase activity"/>
    <property type="evidence" value="ECO:0007669"/>
    <property type="project" value="InterPro"/>
</dbReference>
<dbReference type="GO" id="GO:0006310">
    <property type="term" value="P:DNA recombination"/>
    <property type="evidence" value="ECO:0007669"/>
    <property type="project" value="UniProtKB-UniRule"/>
</dbReference>
<dbReference type="GO" id="GO:0006281">
    <property type="term" value="P:DNA repair"/>
    <property type="evidence" value="ECO:0007669"/>
    <property type="project" value="UniProtKB-UniRule"/>
</dbReference>
<dbReference type="CDD" id="cd00009">
    <property type="entry name" value="AAA"/>
    <property type="match status" value="1"/>
</dbReference>
<dbReference type="Gene3D" id="1.10.8.60">
    <property type="match status" value="1"/>
</dbReference>
<dbReference type="Gene3D" id="3.40.50.300">
    <property type="entry name" value="P-loop containing nucleotide triphosphate hydrolases"/>
    <property type="match status" value="1"/>
</dbReference>
<dbReference type="Gene3D" id="1.10.10.10">
    <property type="entry name" value="Winged helix-like DNA-binding domain superfamily/Winged helix DNA-binding domain"/>
    <property type="match status" value="1"/>
</dbReference>
<dbReference type="HAMAP" id="MF_00016">
    <property type="entry name" value="DNA_HJ_migration_RuvB"/>
    <property type="match status" value="1"/>
</dbReference>
<dbReference type="InterPro" id="IPR003593">
    <property type="entry name" value="AAA+_ATPase"/>
</dbReference>
<dbReference type="InterPro" id="IPR041445">
    <property type="entry name" value="AAA_lid_4"/>
</dbReference>
<dbReference type="InterPro" id="IPR004605">
    <property type="entry name" value="DNA_helicase_Holl-junc_RuvB"/>
</dbReference>
<dbReference type="InterPro" id="IPR027417">
    <property type="entry name" value="P-loop_NTPase"/>
</dbReference>
<dbReference type="InterPro" id="IPR008824">
    <property type="entry name" value="RuvB-like_N"/>
</dbReference>
<dbReference type="InterPro" id="IPR008823">
    <property type="entry name" value="RuvB_C"/>
</dbReference>
<dbReference type="InterPro" id="IPR036388">
    <property type="entry name" value="WH-like_DNA-bd_sf"/>
</dbReference>
<dbReference type="InterPro" id="IPR036390">
    <property type="entry name" value="WH_DNA-bd_sf"/>
</dbReference>
<dbReference type="NCBIfam" id="NF000868">
    <property type="entry name" value="PRK00080.1"/>
    <property type="match status" value="1"/>
</dbReference>
<dbReference type="NCBIfam" id="TIGR00635">
    <property type="entry name" value="ruvB"/>
    <property type="match status" value="1"/>
</dbReference>
<dbReference type="PANTHER" id="PTHR42848">
    <property type="match status" value="1"/>
</dbReference>
<dbReference type="PANTHER" id="PTHR42848:SF1">
    <property type="entry name" value="HOLLIDAY JUNCTION BRANCH MIGRATION COMPLEX SUBUNIT RUVB"/>
    <property type="match status" value="1"/>
</dbReference>
<dbReference type="Pfam" id="PF17864">
    <property type="entry name" value="AAA_lid_4"/>
    <property type="match status" value="1"/>
</dbReference>
<dbReference type="Pfam" id="PF05491">
    <property type="entry name" value="RuvB_C"/>
    <property type="match status" value="1"/>
</dbReference>
<dbReference type="Pfam" id="PF05496">
    <property type="entry name" value="RuvB_N"/>
    <property type="match status" value="1"/>
</dbReference>
<dbReference type="SMART" id="SM00382">
    <property type="entry name" value="AAA"/>
    <property type="match status" value="1"/>
</dbReference>
<dbReference type="SUPFAM" id="SSF52540">
    <property type="entry name" value="P-loop containing nucleoside triphosphate hydrolases"/>
    <property type="match status" value="1"/>
</dbReference>
<dbReference type="SUPFAM" id="SSF46785">
    <property type="entry name" value="Winged helix' DNA-binding domain"/>
    <property type="match status" value="1"/>
</dbReference>
<organism>
    <name type="scientific">Fusobacterium nucleatum subsp. nucleatum (strain ATCC 25586 / DSM 15643 / BCRC 10681 / CIP 101130 / JCM 8532 / KCTC 2640 / LMG 13131 / VPI 4355)</name>
    <dbReference type="NCBI Taxonomy" id="190304"/>
    <lineage>
        <taxon>Bacteria</taxon>
        <taxon>Fusobacteriati</taxon>
        <taxon>Fusobacteriota</taxon>
        <taxon>Fusobacteriia</taxon>
        <taxon>Fusobacteriales</taxon>
        <taxon>Fusobacteriaceae</taxon>
        <taxon>Fusobacterium</taxon>
    </lineage>
</organism>
<accession>Q8RE97</accession>
<reference key="1">
    <citation type="journal article" date="2002" name="J. Bacteriol.">
        <title>Genome sequence and analysis of the oral bacterium Fusobacterium nucleatum strain ATCC 25586.</title>
        <authorList>
            <person name="Kapatral V."/>
            <person name="Anderson I."/>
            <person name="Ivanova N."/>
            <person name="Reznik G."/>
            <person name="Los T."/>
            <person name="Lykidis A."/>
            <person name="Bhattacharyya A."/>
            <person name="Bartman A."/>
            <person name="Gardner W."/>
            <person name="Grechkin G."/>
            <person name="Zhu L."/>
            <person name="Vasieva O."/>
            <person name="Chu L."/>
            <person name="Kogan Y."/>
            <person name="Chaga O."/>
            <person name="Goltsman E."/>
            <person name="Bernal A."/>
            <person name="Larsen N."/>
            <person name="D'Souza M."/>
            <person name="Walunas T."/>
            <person name="Pusch G."/>
            <person name="Haselkorn R."/>
            <person name="Fonstein M."/>
            <person name="Kyrpides N.C."/>
            <person name="Overbeek R."/>
        </authorList>
    </citation>
    <scope>NUCLEOTIDE SEQUENCE [LARGE SCALE GENOMIC DNA]</scope>
    <source>
        <strain>ATCC 25586 / DSM 15643 / BCRC 10681 / CIP 101130 / JCM 8532 / KCTC 2640 / LMG 13131 / VPI 4355</strain>
    </source>
</reference>
<evidence type="ECO:0000255" key="1">
    <source>
        <dbReference type="HAMAP-Rule" id="MF_00016"/>
    </source>
</evidence>
<name>RUVB_FUSNN</name>
<comment type="function">
    <text evidence="1">The RuvA-RuvB-RuvC complex processes Holliday junction (HJ) DNA during genetic recombination and DNA repair, while the RuvA-RuvB complex plays an important role in the rescue of blocked DNA replication forks via replication fork reversal (RFR). RuvA specifically binds to HJ cruciform DNA, conferring on it an open structure. The RuvB hexamer acts as an ATP-dependent pump, pulling dsDNA into and through the RuvAB complex. RuvB forms 2 homohexamers on either side of HJ DNA bound by 1 or 2 RuvA tetramers; 4 subunits per hexamer contact DNA at a time. Coordinated motions by a converter formed by DNA-disengaged RuvB subunits stimulates ATP hydrolysis and nucleotide exchange. Immobilization of the converter enables RuvB to convert the ATP-contained energy into a lever motion, pulling 2 nucleotides of DNA out of the RuvA tetramer per ATP hydrolyzed, thus driving DNA branch migration. The RuvB motors rotate together with the DNA substrate, which together with the progressing nucleotide cycle form the mechanistic basis for DNA recombination by continuous HJ branch migration. Branch migration allows RuvC to scan DNA until it finds its consensus sequence, where it cleaves and resolves cruciform DNA.</text>
</comment>
<comment type="catalytic activity">
    <reaction evidence="1">
        <text>ATP + H2O = ADP + phosphate + H(+)</text>
        <dbReference type="Rhea" id="RHEA:13065"/>
        <dbReference type="ChEBI" id="CHEBI:15377"/>
        <dbReference type="ChEBI" id="CHEBI:15378"/>
        <dbReference type="ChEBI" id="CHEBI:30616"/>
        <dbReference type="ChEBI" id="CHEBI:43474"/>
        <dbReference type="ChEBI" id="CHEBI:456216"/>
    </reaction>
</comment>
<comment type="subunit">
    <text evidence="1">Homohexamer. Forms an RuvA(8)-RuvB(12)-Holliday junction (HJ) complex. HJ DNA is sandwiched between 2 RuvA tetramers; dsDNA enters through RuvA and exits via RuvB. An RuvB hexamer assembles on each DNA strand where it exits the tetramer. Each RuvB hexamer is contacted by two RuvA subunits (via domain III) on 2 adjacent RuvB subunits; this complex drives branch migration. In the full resolvosome a probable DNA-RuvA(4)-RuvB(12)-RuvC(2) complex forms which resolves the HJ.</text>
</comment>
<comment type="subcellular location">
    <subcellularLocation>
        <location evidence="1">Cytoplasm</location>
    </subcellularLocation>
</comment>
<comment type="domain">
    <text evidence="1">Has 3 domains, the large (RuvB-L) and small ATPase (RuvB-S) domains and the C-terminal head (RuvB-H) domain. The head domain binds DNA, while the ATPase domains jointly bind ATP, ADP or are empty depending on the state of the subunit in the translocation cycle. During a single DNA translocation step the structure of each domain remains the same, but their relative positions change.</text>
</comment>
<comment type="similarity">
    <text evidence="1">Belongs to the RuvB family.</text>
</comment>
<protein>
    <recommendedName>
        <fullName evidence="1">Holliday junction branch migration complex subunit RuvB</fullName>
        <ecNumber evidence="1">3.6.4.-</ecNumber>
    </recommendedName>
</protein>
<keyword id="KW-0067">ATP-binding</keyword>
<keyword id="KW-0963">Cytoplasm</keyword>
<keyword id="KW-0227">DNA damage</keyword>
<keyword id="KW-0233">DNA recombination</keyword>
<keyword id="KW-0234">DNA repair</keyword>
<keyword id="KW-0238">DNA-binding</keyword>
<keyword id="KW-0378">Hydrolase</keyword>
<keyword id="KW-0547">Nucleotide-binding</keyword>
<keyword id="KW-1185">Reference proteome</keyword>